<dbReference type="EMBL" id="Y13732">
    <property type="protein sequence ID" value="CAA74060.1"/>
    <property type="molecule type" value="Genomic_DNA"/>
</dbReference>
<dbReference type="EMBL" id="Y13732">
    <property type="protein sequence ID" value="CAA74061.1"/>
    <property type="status" value="ALT_INIT"/>
    <property type="molecule type" value="Genomic_DNA"/>
</dbReference>
<dbReference type="EMBL" id="AM260479">
    <property type="protein sequence ID" value="CAJ92221.1"/>
    <property type="molecule type" value="Genomic_DNA"/>
</dbReference>
<dbReference type="RefSeq" id="WP_011614865.1">
    <property type="nucleotide sequence ID" value="NC_008313.1"/>
</dbReference>
<dbReference type="SMR" id="O30332"/>
<dbReference type="STRING" id="381666.H16_A1080"/>
<dbReference type="KEGG" id="reh:H16_A1080"/>
<dbReference type="PATRIC" id="fig|381666.6.peg.1464"/>
<dbReference type="eggNOG" id="COG0829">
    <property type="taxonomic scope" value="Bacteria"/>
</dbReference>
<dbReference type="HOGENOM" id="CLU_056339_0_0_4"/>
<dbReference type="OrthoDB" id="9798842at2"/>
<dbReference type="Proteomes" id="UP000008210">
    <property type="component" value="Chromosome 1"/>
</dbReference>
<dbReference type="GO" id="GO:0005737">
    <property type="term" value="C:cytoplasm"/>
    <property type="evidence" value="ECO:0007669"/>
    <property type="project" value="UniProtKB-SubCell"/>
</dbReference>
<dbReference type="GO" id="GO:0016151">
    <property type="term" value="F:nickel cation binding"/>
    <property type="evidence" value="ECO:0007669"/>
    <property type="project" value="UniProtKB-UniRule"/>
</dbReference>
<dbReference type="HAMAP" id="MF_01384">
    <property type="entry name" value="UreD"/>
    <property type="match status" value="1"/>
</dbReference>
<dbReference type="InterPro" id="IPR002669">
    <property type="entry name" value="UreD"/>
</dbReference>
<dbReference type="PANTHER" id="PTHR33643">
    <property type="entry name" value="UREASE ACCESSORY PROTEIN D"/>
    <property type="match status" value="1"/>
</dbReference>
<dbReference type="PANTHER" id="PTHR33643:SF1">
    <property type="entry name" value="UREASE ACCESSORY PROTEIN D"/>
    <property type="match status" value="1"/>
</dbReference>
<dbReference type="Pfam" id="PF01774">
    <property type="entry name" value="UreD"/>
    <property type="match status" value="1"/>
</dbReference>
<name>URED_CUPNH</name>
<reference key="1">
    <citation type="submission" date="1997-09" db="EMBL/GenBank/DDBJ databases">
        <title>Ralstonia eutropha H16 urease genes and proteins.</title>
        <authorList>
            <person name="Piettre C."/>
            <person name="Toussaint A."/>
        </authorList>
    </citation>
    <scope>NUCLEOTIDE SEQUENCE [GENOMIC DNA]</scope>
</reference>
<reference key="2">
    <citation type="journal article" date="2006" name="Nat. Biotechnol.">
        <title>Genome sequence of the bioplastic-producing 'Knallgas' bacterium Ralstonia eutropha H16.</title>
        <authorList>
            <person name="Pohlmann A."/>
            <person name="Fricke W.F."/>
            <person name="Reinecke F."/>
            <person name="Kusian B."/>
            <person name="Liesegang H."/>
            <person name="Cramm R."/>
            <person name="Eitinger T."/>
            <person name="Ewering C."/>
            <person name="Poetter M."/>
            <person name="Schwartz E."/>
            <person name="Strittmatter A."/>
            <person name="Voss I."/>
            <person name="Gottschalk G."/>
            <person name="Steinbuechel A."/>
            <person name="Friedrich B."/>
            <person name="Bowien B."/>
        </authorList>
    </citation>
    <scope>NUCLEOTIDE SEQUENCE [LARGE SCALE GENOMIC DNA]</scope>
    <source>
        <strain>ATCC 17699 / DSM 428 / KCTC 22496 / NCIMB 10442 / H16 / Stanier 337</strain>
    </source>
</reference>
<organism>
    <name type="scientific">Cupriavidus necator (strain ATCC 17699 / DSM 428 / KCTC 22496 / NCIMB 10442 / H16 / Stanier 337)</name>
    <name type="common">Ralstonia eutropha</name>
    <dbReference type="NCBI Taxonomy" id="381666"/>
    <lineage>
        <taxon>Bacteria</taxon>
        <taxon>Pseudomonadati</taxon>
        <taxon>Pseudomonadota</taxon>
        <taxon>Betaproteobacteria</taxon>
        <taxon>Burkholderiales</taxon>
        <taxon>Burkholderiaceae</taxon>
        <taxon>Cupriavidus</taxon>
    </lineage>
</organism>
<accession>O30332</accession>
<accession>O30333</accession>
<accession>Q0KCQ0</accession>
<protein>
    <recommendedName>
        <fullName evidence="1">Urease accessory protein UreD</fullName>
    </recommendedName>
</protein>
<keyword id="KW-0143">Chaperone</keyword>
<keyword id="KW-0963">Cytoplasm</keyword>
<keyword id="KW-0996">Nickel insertion</keyword>
<keyword id="KW-1185">Reference proteome</keyword>
<sequence>MRHPDLPSSLTVPAAWQATLRLRFAQRGERTALTERRHQGPLLVQKPLYPEGGICHAVILHPPAGVAGGDSLDIDVTVEDGAHAVLATPGATKWYKSLGREAAQHVRLTVGAGARLDWLPQENIVFDDARARISTVLDVAPGGSAIGWDAVVLGRQASGEQWTRGALWLDTRVGTGERALWIEQSHLEAESPLRTAVAGLDGLNVLGTLWAVGEGATQELAEALAEQLPYTPELRAGVTCLATSGQSMLLLRVLGRQMEAVRHVMVDSWQALRMPIHGVAARPLRLWAT</sequence>
<feature type="chain" id="PRO_0000067603" description="Urease accessory protein UreD">
    <location>
        <begin position="1"/>
        <end position="289"/>
    </location>
</feature>
<gene>
    <name evidence="1" type="primary">ureD</name>
    <name type="ordered locus">H16_A1080</name>
</gene>
<comment type="function">
    <text evidence="1">Required for maturation of urease via the functional incorporation of the urease nickel metallocenter.</text>
</comment>
<comment type="subunit">
    <text evidence="1">UreD, UreF and UreG form a complex that acts as a GTP-hydrolysis-dependent molecular chaperone, activating the urease apoprotein by helping to assemble the nickel containing metallocenter of UreC. The UreE protein probably delivers the nickel.</text>
</comment>
<comment type="subcellular location">
    <subcellularLocation>
        <location evidence="1">Cytoplasm</location>
    </subcellularLocation>
</comment>
<comment type="similarity">
    <text evidence="1">Belongs to the UreD family.</text>
</comment>
<comment type="sequence caution" evidence="2">
    <conflict type="erroneous initiation">
        <sequence resource="EMBL-CDS" id="CAA74061"/>
    </conflict>
</comment>
<proteinExistence type="inferred from homology"/>
<evidence type="ECO:0000255" key="1">
    <source>
        <dbReference type="HAMAP-Rule" id="MF_01384"/>
    </source>
</evidence>
<evidence type="ECO:0000305" key="2"/>